<protein>
    <recommendedName>
        <fullName evidence="2">Methionine aminopeptidase 1</fullName>
        <shortName evidence="2">MAP 1</shortName>
        <shortName evidence="2">MetAP 1</shortName>
        <ecNumber evidence="2">3.4.11.18</ecNumber>
    </recommendedName>
    <alternativeName>
        <fullName evidence="2">Peptidase M 1</fullName>
    </alternativeName>
</protein>
<reference key="1">
    <citation type="journal article" date="2005" name="Science">
        <title>The transcriptional landscape of the mammalian genome.</title>
        <authorList>
            <person name="Carninci P."/>
            <person name="Kasukawa T."/>
            <person name="Katayama S."/>
            <person name="Gough J."/>
            <person name="Frith M.C."/>
            <person name="Maeda N."/>
            <person name="Oyama R."/>
            <person name="Ravasi T."/>
            <person name="Lenhard B."/>
            <person name="Wells C."/>
            <person name="Kodzius R."/>
            <person name="Shimokawa K."/>
            <person name="Bajic V.B."/>
            <person name="Brenner S.E."/>
            <person name="Batalov S."/>
            <person name="Forrest A.R."/>
            <person name="Zavolan M."/>
            <person name="Davis M.J."/>
            <person name="Wilming L.G."/>
            <person name="Aidinis V."/>
            <person name="Allen J.E."/>
            <person name="Ambesi-Impiombato A."/>
            <person name="Apweiler R."/>
            <person name="Aturaliya R.N."/>
            <person name="Bailey T.L."/>
            <person name="Bansal M."/>
            <person name="Baxter L."/>
            <person name="Beisel K.W."/>
            <person name="Bersano T."/>
            <person name="Bono H."/>
            <person name="Chalk A.M."/>
            <person name="Chiu K.P."/>
            <person name="Choudhary V."/>
            <person name="Christoffels A."/>
            <person name="Clutterbuck D.R."/>
            <person name="Crowe M.L."/>
            <person name="Dalla E."/>
            <person name="Dalrymple B.P."/>
            <person name="de Bono B."/>
            <person name="Della Gatta G."/>
            <person name="di Bernardo D."/>
            <person name="Down T."/>
            <person name="Engstrom P."/>
            <person name="Fagiolini M."/>
            <person name="Faulkner G."/>
            <person name="Fletcher C.F."/>
            <person name="Fukushima T."/>
            <person name="Furuno M."/>
            <person name="Futaki S."/>
            <person name="Gariboldi M."/>
            <person name="Georgii-Hemming P."/>
            <person name="Gingeras T.R."/>
            <person name="Gojobori T."/>
            <person name="Green R.E."/>
            <person name="Gustincich S."/>
            <person name="Harbers M."/>
            <person name="Hayashi Y."/>
            <person name="Hensch T.K."/>
            <person name="Hirokawa N."/>
            <person name="Hill D."/>
            <person name="Huminiecki L."/>
            <person name="Iacono M."/>
            <person name="Ikeo K."/>
            <person name="Iwama A."/>
            <person name="Ishikawa T."/>
            <person name="Jakt M."/>
            <person name="Kanapin A."/>
            <person name="Katoh M."/>
            <person name="Kawasawa Y."/>
            <person name="Kelso J."/>
            <person name="Kitamura H."/>
            <person name="Kitano H."/>
            <person name="Kollias G."/>
            <person name="Krishnan S.P."/>
            <person name="Kruger A."/>
            <person name="Kummerfeld S.K."/>
            <person name="Kurochkin I.V."/>
            <person name="Lareau L.F."/>
            <person name="Lazarevic D."/>
            <person name="Lipovich L."/>
            <person name="Liu J."/>
            <person name="Liuni S."/>
            <person name="McWilliam S."/>
            <person name="Madan Babu M."/>
            <person name="Madera M."/>
            <person name="Marchionni L."/>
            <person name="Matsuda H."/>
            <person name="Matsuzawa S."/>
            <person name="Miki H."/>
            <person name="Mignone F."/>
            <person name="Miyake S."/>
            <person name="Morris K."/>
            <person name="Mottagui-Tabar S."/>
            <person name="Mulder N."/>
            <person name="Nakano N."/>
            <person name="Nakauchi H."/>
            <person name="Ng P."/>
            <person name="Nilsson R."/>
            <person name="Nishiguchi S."/>
            <person name="Nishikawa S."/>
            <person name="Nori F."/>
            <person name="Ohara O."/>
            <person name="Okazaki Y."/>
            <person name="Orlando V."/>
            <person name="Pang K.C."/>
            <person name="Pavan W.J."/>
            <person name="Pavesi G."/>
            <person name="Pesole G."/>
            <person name="Petrovsky N."/>
            <person name="Piazza S."/>
            <person name="Reed J."/>
            <person name="Reid J.F."/>
            <person name="Ring B.Z."/>
            <person name="Ringwald M."/>
            <person name="Rost B."/>
            <person name="Ruan Y."/>
            <person name="Salzberg S.L."/>
            <person name="Sandelin A."/>
            <person name="Schneider C."/>
            <person name="Schoenbach C."/>
            <person name="Sekiguchi K."/>
            <person name="Semple C.A."/>
            <person name="Seno S."/>
            <person name="Sessa L."/>
            <person name="Sheng Y."/>
            <person name="Shibata Y."/>
            <person name="Shimada H."/>
            <person name="Shimada K."/>
            <person name="Silva D."/>
            <person name="Sinclair B."/>
            <person name="Sperling S."/>
            <person name="Stupka E."/>
            <person name="Sugiura K."/>
            <person name="Sultana R."/>
            <person name="Takenaka Y."/>
            <person name="Taki K."/>
            <person name="Tammoja K."/>
            <person name="Tan S.L."/>
            <person name="Tang S."/>
            <person name="Taylor M.S."/>
            <person name="Tegner J."/>
            <person name="Teichmann S.A."/>
            <person name="Ueda H.R."/>
            <person name="van Nimwegen E."/>
            <person name="Verardo R."/>
            <person name="Wei C.L."/>
            <person name="Yagi K."/>
            <person name="Yamanishi H."/>
            <person name="Zabarovsky E."/>
            <person name="Zhu S."/>
            <person name="Zimmer A."/>
            <person name="Hide W."/>
            <person name="Bult C."/>
            <person name="Grimmond S.M."/>
            <person name="Teasdale R.D."/>
            <person name="Liu E.T."/>
            <person name="Brusic V."/>
            <person name="Quackenbush J."/>
            <person name="Wahlestedt C."/>
            <person name="Mattick J.S."/>
            <person name="Hume D.A."/>
            <person name="Kai C."/>
            <person name="Sasaki D."/>
            <person name="Tomaru Y."/>
            <person name="Fukuda S."/>
            <person name="Kanamori-Katayama M."/>
            <person name="Suzuki M."/>
            <person name="Aoki J."/>
            <person name="Arakawa T."/>
            <person name="Iida J."/>
            <person name="Imamura K."/>
            <person name="Itoh M."/>
            <person name="Kato T."/>
            <person name="Kawaji H."/>
            <person name="Kawagashira N."/>
            <person name="Kawashima T."/>
            <person name="Kojima M."/>
            <person name="Kondo S."/>
            <person name="Konno H."/>
            <person name="Nakano K."/>
            <person name="Ninomiya N."/>
            <person name="Nishio T."/>
            <person name="Okada M."/>
            <person name="Plessy C."/>
            <person name="Shibata K."/>
            <person name="Shiraki T."/>
            <person name="Suzuki S."/>
            <person name="Tagami M."/>
            <person name="Waki K."/>
            <person name="Watahiki A."/>
            <person name="Okamura-Oho Y."/>
            <person name="Suzuki H."/>
            <person name="Kawai J."/>
            <person name="Hayashizaki Y."/>
        </authorList>
    </citation>
    <scope>NUCLEOTIDE SEQUENCE [LARGE SCALE MRNA]</scope>
    <source>
        <strain>C57BL/6J</strain>
    </source>
</reference>
<reference key="2">
    <citation type="journal article" date="2010" name="Cell">
        <title>A tissue-specific atlas of mouse protein phosphorylation and expression.</title>
        <authorList>
            <person name="Huttlin E.L."/>
            <person name="Jedrychowski M.P."/>
            <person name="Elias J.E."/>
            <person name="Goswami T."/>
            <person name="Rad R."/>
            <person name="Beausoleil S.A."/>
            <person name="Villen J."/>
            <person name="Haas W."/>
            <person name="Sowa M.E."/>
            <person name="Gygi S.P."/>
        </authorList>
    </citation>
    <scope>IDENTIFICATION BY MASS SPECTROMETRY [LARGE SCALE ANALYSIS]</scope>
    <source>
        <tissue>Heart</tissue>
        <tissue>Kidney</tissue>
        <tissue>Liver</tissue>
        <tissue>Pancreas</tissue>
        <tissue>Spleen</tissue>
        <tissue>Testis</tissue>
    </source>
</reference>
<reference key="3">
    <citation type="journal article" date="2022" name="Cell Rep.">
        <title>Zng1 is a GTP-dependent zinc transferase needed for activation of methionine aminopeptidase.</title>
        <authorList>
            <person name="Pasquini M."/>
            <person name="Grosjean N."/>
            <person name="Hixson K.K."/>
            <person name="Nicora C.D."/>
            <person name="Yee E.F."/>
            <person name="Lipton M."/>
            <person name="Blaby I.K."/>
            <person name="Haley J.D."/>
            <person name="Blaby-Haas C.E."/>
        </authorList>
    </citation>
    <scope>STRUCTURE BY NMR OF 1-59</scope>
    <scope>ZINC-BINDING</scope>
    <scope>FUNCTION</scope>
    <scope>COFACTOR</scope>
    <scope>DOMAIN</scope>
</reference>
<gene>
    <name type="primary">Metap1</name>
</gene>
<proteinExistence type="evidence at protein level"/>
<sequence>MAAVETRVCETDGCSSEAKLQCPTCIKLGIQGSYFCSQECFKGSWATHKLLHKKAKDEKAKREVCSWTVEGDVNTDPWAGYRYTGKLRPHYPLMPTRPVPSYIQRPDYADHPLGMSESEQALKGTSQIKLLSSEDIEGMRLVCRLAREVLDIAAGMIKAGVTTEEIDHAVHLACIARNCYPSPLNYYNFPKSCCTSVNEVICHGIPDRRPLQEGDIVNVDITLYRNGYHGDLNETFFVGDVDEGARKLVQTTYECLMQAIDAVKPGVRYRELGNIIQKHAQANGFSVVRSYCGHGIHKLFHTAPNVPHYAKNKAVGVMKSGHVFTIEPMICEGGWQDETWPDGWTAVTRDGKRSAQFEHTLLVTDTGCEILTRRLDSSRPHFMSQF</sequence>
<dbReference type="EC" id="3.4.11.18" evidence="2"/>
<dbReference type="EMBL" id="AK077694">
    <property type="protein sequence ID" value="BAC36961.1"/>
    <property type="molecule type" value="mRNA"/>
</dbReference>
<dbReference type="CCDS" id="CCDS17869.1"/>
<dbReference type="RefSeq" id="NP_780433.1">
    <property type="nucleotide sequence ID" value="NM_175224.4"/>
</dbReference>
<dbReference type="PDB" id="7SEK">
    <property type="method" value="NMR"/>
    <property type="chains" value="A=1-59"/>
</dbReference>
<dbReference type="PDBsum" id="7SEK"/>
<dbReference type="BMRB" id="Q8BP48"/>
<dbReference type="SMR" id="Q8BP48"/>
<dbReference type="BioGRID" id="217625">
    <property type="interactions" value="3"/>
</dbReference>
<dbReference type="FunCoup" id="Q8BP48">
    <property type="interactions" value="2756"/>
</dbReference>
<dbReference type="IntAct" id="Q8BP48">
    <property type="interactions" value="4"/>
</dbReference>
<dbReference type="STRING" id="10090.ENSMUSP00000029804"/>
<dbReference type="MEROPS" id="M24.017"/>
<dbReference type="GlyGen" id="Q8BP48">
    <property type="glycosylation" value="1 site, 1 O-linked glycan (1 site)"/>
</dbReference>
<dbReference type="iPTMnet" id="Q8BP48"/>
<dbReference type="PhosphoSitePlus" id="Q8BP48"/>
<dbReference type="SwissPalm" id="Q8BP48"/>
<dbReference type="jPOST" id="Q8BP48"/>
<dbReference type="PaxDb" id="10090-ENSMUSP00000029804"/>
<dbReference type="ProteomicsDB" id="252727"/>
<dbReference type="Pumba" id="Q8BP48"/>
<dbReference type="Antibodypedia" id="25840">
    <property type="antibodies" value="196 antibodies from 25 providers"/>
</dbReference>
<dbReference type="DNASU" id="75624"/>
<dbReference type="Ensembl" id="ENSMUST00000029804.13">
    <property type="protein sequence ID" value="ENSMUSP00000029804.9"/>
    <property type="gene ID" value="ENSMUSG00000005813.13"/>
</dbReference>
<dbReference type="GeneID" id="75624"/>
<dbReference type="KEGG" id="mmu:75624"/>
<dbReference type="UCSC" id="uc008rnl.1">
    <property type="organism name" value="mouse"/>
</dbReference>
<dbReference type="AGR" id="MGI:1922874"/>
<dbReference type="CTD" id="23173"/>
<dbReference type="MGI" id="MGI:1922874">
    <property type="gene designation" value="Metap1"/>
</dbReference>
<dbReference type="VEuPathDB" id="HostDB:ENSMUSG00000005813"/>
<dbReference type="eggNOG" id="KOG2738">
    <property type="taxonomic scope" value="Eukaryota"/>
</dbReference>
<dbReference type="GeneTree" id="ENSGT00940000158205"/>
<dbReference type="HOGENOM" id="CLU_015857_2_1_1"/>
<dbReference type="InParanoid" id="Q8BP48"/>
<dbReference type="OMA" id="FYGDHAY"/>
<dbReference type="OrthoDB" id="3209743at2759"/>
<dbReference type="PhylomeDB" id="Q8BP48"/>
<dbReference type="TreeFam" id="TF105753"/>
<dbReference type="Reactome" id="R-MMU-2514859">
    <property type="pathway name" value="Inactivation, recovery and regulation of the phototransduction cascade"/>
</dbReference>
<dbReference type="BioGRID-ORCS" id="75624">
    <property type="hits" value="24 hits in 79 CRISPR screens"/>
</dbReference>
<dbReference type="PRO" id="PR:Q8BP48"/>
<dbReference type="Proteomes" id="UP000000589">
    <property type="component" value="Chromosome 3"/>
</dbReference>
<dbReference type="RNAct" id="Q8BP48">
    <property type="molecule type" value="protein"/>
</dbReference>
<dbReference type="Bgee" id="ENSMUSG00000005813">
    <property type="expression patterns" value="Expressed in primitive streak and 263 other cell types or tissues"/>
</dbReference>
<dbReference type="ExpressionAtlas" id="Q8BP48">
    <property type="expression patterns" value="baseline and differential"/>
</dbReference>
<dbReference type="GO" id="GO:0022626">
    <property type="term" value="C:cytosolic ribosome"/>
    <property type="evidence" value="ECO:0007669"/>
    <property type="project" value="UniProtKB-UniRule"/>
</dbReference>
<dbReference type="GO" id="GO:0004177">
    <property type="term" value="F:aminopeptidase activity"/>
    <property type="evidence" value="ECO:0000314"/>
    <property type="project" value="UniProt"/>
</dbReference>
<dbReference type="GO" id="GO:0004239">
    <property type="term" value="F:initiator methionyl aminopeptidase activity"/>
    <property type="evidence" value="ECO:0000250"/>
    <property type="project" value="UniProtKB"/>
</dbReference>
<dbReference type="GO" id="GO:0070006">
    <property type="term" value="F:metalloaminopeptidase activity"/>
    <property type="evidence" value="ECO:0007669"/>
    <property type="project" value="UniProtKB-UniRule"/>
</dbReference>
<dbReference type="GO" id="GO:0008270">
    <property type="term" value="F:zinc ion binding"/>
    <property type="evidence" value="ECO:0007669"/>
    <property type="project" value="UniProtKB-KW"/>
</dbReference>
<dbReference type="GO" id="GO:0051604">
    <property type="term" value="P:protein maturation"/>
    <property type="evidence" value="ECO:0000314"/>
    <property type="project" value="UniProt"/>
</dbReference>
<dbReference type="GO" id="GO:0006508">
    <property type="term" value="P:proteolysis"/>
    <property type="evidence" value="ECO:0007669"/>
    <property type="project" value="UniProtKB-KW"/>
</dbReference>
<dbReference type="CDD" id="cd01086">
    <property type="entry name" value="MetAP1"/>
    <property type="match status" value="1"/>
</dbReference>
<dbReference type="FunFam" id="3.90.230.10:FF:000010">
    <property type="entry name" value="Methionine aminopeptidase"/>
    <property type="match status" value="1"/>
</dbReference>
<dbReference type="Gene3D" id="3.90.230.10">
    <property type="entry name" value="Creatinase/methionine aminopeptidase superfamily"/>
    <property type="match status" value="1"/>
</dbReference>
<dbReference type="HAMAP" id="MF_01974">
    <property type="entry name" value="MetAP_1"/>
    <property type="match status" value="1"/>
</dbReference>
<dbReference type="InterPro" id="IPR036005">
    <property type="entry name" value="Creatinase/aminopeptidase-like"/>
</dbReference>
<dbReference type="InterPro" id="IPR000994">
    <property type="entry name" value="Pept_M24"/>
</dbReference>
<dbReference type="InterPro" id="IPR001714">
    <property type="entry name" value="Pept_M24_MAP"/>
</dbReference>
<dbReference type="InterPro" id="IPR002467">
    <property type="entry name" value="Pept_M24A_MAP1"/>
</dbReference>
<dbReference type="InterPro" id="IPR031615">
    <property type="entry name" value="Zfn-C6H2"/>
</dbReference>
<dbReference type="NCBIfam" id="TIGR00500">
    <property type="entry name" value="met_pdase_I"/>
    <property type="match status" value="1"/>
</dbReference>
<dbReference type="PANTHER" id="PTHR43330">
    <property type="entry name" value="METHIONINE AMINOPEPTIDASE"/>
    <property type="match status" value="1"/>
</dbReference>
<dbReference type="PANTHER" id="PTHR43330:SF7">
    <property type="entry name" value="METHIONINE AMINOPEPTIDASE 1"/>
    <property type="match status" value="1"/>
</dbReference>
<dbReference type="Pfam" id="PF00557">
    <property type="entry name" value="Peptidase_M24"/>
    <property type="match status" value="1"/>
</dbReference>
<dbReference type="Pfam" id="PF15801">
    <property type="entry name" value="zf-C6H2"/>
    <property type="match status" value="1"/>
</dbReference>
<dbReference type="PRINTS" id="PR00599">
    <property type="entry name" value="MAPEPTIDASE"/>
</dbReference>
<dbReference type="SUPFAM" id="SSF55920">
    <property type="entry name" value="Creatinase/aminopeptidase"/>
    <property type="match status" value="1"/>
</dbReference>
<dbReference type="PROSITE" id="PS00680">
    <property type="entry name" value="MAP_1"/>
    <property type="match status" value="1"/>
</dbReference>
<dbReference type="PROSITE" id="PS52013">
    <property type="entry name" value="ZF_C6H2"/>
    <property type="match status" value="1"/>
</dbReference>
<keyword id="KW-0002">3D-structure</keyword>
<keyword id="KW-0007">Acetylation</keyword>
<keyword id="KW-0031">Aminopeptidase</keyword>
<keyword id="KW-0963">Cytoplasm</keyword>
<keyword id="KW-0378">Hydrolase</keyword>
<keyword id="KW-0479">Metal-binding</keyword>
<keyword id="KW-0645">Protease</keyword>
<keyword id="KW-1185">Reference proteome</keyword>
<keyword id="KW-0862">Zinc</keyword>
<keyword id="KW-0863">Zinc-finger</keyword>
<evidence type="ECO:0000250" key="1">
    <source>
        <dbReference type="UniProtKB" id="P53582"/>
    </source>
</evidence>
<evidence type="ECO:0000255" key="2">
    <source>
        <dbReference type="HAMAP-Rule" id="MF_03174"/>
    </source>
</evidence>
<evidence type="ECO:0000255" key="3">
    <source>
        <dbReference type="PROSITE-ProRule" id="PRU01357"/>
    </source>
</evidence>
<evidence type="ECO:0000269" key="4">
    <source>
    </source>
</evidence>
<evidence type="ECO:0007744" key="5">
    <source>
        <dbReference type="PDB" id="7SEK"/>
    </source>
</evidence>
<evidence type="ECO:0007829" key="6">
    <source>
        <dbReference type="PDB" id="7SEK"/>
    </source>
</evidence>
<comment type="function">
    <text evidence="2 4">Cotranslationally removes the N-terminal methionine from nascent proteins. The N-terminal methionine is often cleaved when the second residue in the primary sequence is small and uncharged (Met-Ala-, Cys, Gly, Pro, Ser, Thr, or Val).</text>
</comment>
<comment type="catalytic activity">
    <reaction evidence="2">
        <text>Release of N-terminal amino acids, preferentially methionine, from peptides and arylamides.</text>
        <dbReference type="EC" id="3.4.11.18"/>
    </reaction>
</comment>
<comment type="cofactor">
    <cofactor evidence="2 4">
        <name>Zn(2+)</name>
        <dbReference type="ChEBI" id="CHEBI:29105"/>
    </cofactor>
    <cofactor evidence="2">
        <name>Co(2+)</name>
        <dbReference type="ChEBI" id="CHEBI:48828"/>
    </cofactor>
    <cofactor evidence="2">
        <name>Mn(2+)</name>
        <dbReference type="ChEBI" id="CHEBI:29035"/>
    </cofactor>
    <cofactor evidence="2">
        <name>Fe(2+)</name>
        <dbReference type="ChEBI" id="CHEBI:29033"/>
    </cofactor>
    <text evidence="2 4">Binds 2 divalent metal cations per subunit. Has a high-affinity and a low affinity metal-binding site. The true nature of the physiological cofactor is under debate. The enzyme is active with zinc, cobalt, manganese or divalent iron ions. Has high activity with zinc; zinc cofactor is transferred into the active site region by the ZNG1 zinc chaperone.</text>
</comment>
<comment type="subunit">
    <text evidence="2">Associates with the 60S ribosomal subunit of the 80S translational complex.</text>
</comment>
<comment type="subcellular location">
    <subcellularLocation>
        <location evidence="2">Cytoplasm</location>
    </subcellularLocation>
</comment>
<comment type="domain">
    <text evidence="4">The C6H2-type zinc finger recruits ZNG1, promoting zinc cofactor transfer in the peptidase domain of METAP1.</text>
</comment>
<comment type="similarity">
    <text evidence="2">Belongs to the peptidase M24A family. Methionine aminopeptidase type 1 subfamily.</text>
</comment>
<accession>Q8BP48</accession>
<organism>
    <name type="scientific">Mus musculus</name>
    <name type="common">Mouse</name>
    <dbReference type="NCBI Taxonomy" id="10090"/>
    <lineage>
        <taxon>Eukaryota</taxon>
        <taxon>Metazoa</taxon>
        <taxon>Chordata</taxon>
        <taxon>Craniata</taxon>
        <taxon>Vertebrata</taxon>
        <taxon>Euteleostomi</taxon>
        <taxon>Mammalia</taxon>
        <taxon>Eutheria</taxon>
        <taxon>Euarchontoglires</taxon>
        <taxon>Glires</taxon>
        <taxon>Rodentia</taxon>
        <taxon>Myomorpha</taxon>
        <taxon>Muroidea</taxon>
        <taxon>Muridae</taxon>
        <taxon>Murinae</taxon>
        <taxon>Mus</taxon>
        <taxon>Mus</taxon>
    </lineage>
</organism>
<name>MAP11_MOUSE</name>
<feature type="initiator methionine" description="Removed" evidence="1">
    <location>
        <position position="1"/>
    </location>
</feature>
<feature type="chain" id="PRO_0000148968" description="Methionine aminopeptidase 1">
    <location>
        <begin position="2"/>
        <end position="386"/>
    </location>
</feature>
<feature type="zinc finger region" description="C6H2-type" evidence="3">
    <location>
        <begin position="6"/>
        <end position="59"/>
    </location>
</feature>
<feature type="binding site" evidence="4 5">
    <location>
        <position position="9"/>
    </location>
    <ligand>
        <name>Zn(2+)</name>
        <dbReference type="ChEBI" id="CHEBI:29105"/>
        <label>1</label>
    </ligand>
</feature>
<feature type="binding site" evidence="4 5">
    <location>
        <position position="14"/>
    </location>
    <ligand>
        <name>Zn(2+)</name>
        <dbReference type="ChEBI" id="CHEBI:29105"/>
        <label>1</label>
    </ligand>
</feature>
<feature type="binding site" evidence="4 5">
    <location>
        <position position="22"/>
    </location>
    <ligand>
        <name>Zn(2+)</name>
        <dbReference type="ChEBI" id="CHEBI:29105"/>
        <label>2</label>
    </ligand>
</feature>
<feature type="binding site" evidence="4 5">
    <location>
        <position position="25"/>
    </location>
    <ligand>
        <name>Zn(2+)</name>
        <dbReference type="ChEBI" id="CHEBI:29105"/>
        <label>2</label>
    </ligand>
</feature>
<feature type="binding site" evidence="4 5">
    <location>
        <position position="36"/>
    </location>
    <ligand>
        <name>Zn(2+)</name>
        <dbReference type="ChEBI" id="CHEBI:29105"/>
        <label>1</label>
    </ligand>
</feature>
<feature type="binding site" evidence="4 5">
    <location>
        <position position="40"/>
    </location>
    <ligand>
        <name>Zn(2+)</name>
        <dbReference type="ChEBI" id="CHEBI:29105"/>
        <label>1</label>
    </ligand>
</feature>
<feature type="binding site" evidence="4 5">
    <location>
        <position position="48"/>
    </location>
    <ligand>
        <name>Zn(2+)</name>
        <dbReference type="ChEBI" id="CHEBI:29105"/>
        <label>2</label>
    </ligand>
</feature>
<feature type="binding site" evidence="4 5">
    <location>
        <position position="52"/>
    </location>
    <ligand>
        <name>Zn(2+)</name>
        <dbReference type="ChEBI" id="CHEBI:29105"/>
        <label>2</label>
    </ligand>
</feature>
<feature type="binding site" evidence="4 5">
    <location>
        <position position="53"/>
    </location>
    <ligand>
        <name>Zn(2+)</name>
        <dbReference type="ChEBI" id="CHEBI:29105"/>
        <label>2</label>
    </ligand>
</feature>
<feature type="binding site" evidence="2">
    <location>
        <position position="203"/>
    </location>
    <ligand>
        <name>a protein</name>
        <dbReference type="ChEBI" id="CHEBI:16541"/>
    </ligand>
    <ligandPart>
        <name>N-terminal L-methionine residue</name>
        <dbReference type="ChEBI" id="CHEBI:64731"/>
    </ligandPart>
</feature>
<feature type="binding site" evidence="2">
    <location>
        <position position="220"/>
    </location>
    <ligand>
        <name>Zn(2+)</name>
        <dbReference type="ChEBI" id="CHEBI:29105"/>
        <label>3</label>
    </ligand>
</feature>
<feature type="binding site" evidence="2">
    <location>
        <position position="231"/>
    </location>
    <ligand>
        <name>Zn(2+)</name>
        <dbReference type="ChEBI" id="CHEBI:29105"/>
        <label>3</label>
    </ligand>
</feature>
<feature type="binding site" evidence="2">
    <location>
        <position position="231"/>
    </location>
    <ligand>
        <name>Zn(2+)</name>
        <dbReference type="ChEBI" id="CHEBI:29105"/>
        <label>4</label>
        <note>catalytic</note>
    </ligand>
</feature>
<feature type="binding site" evidence="2">
    <location>
        <position position="294"/>
    </location>
    <ligand>
        <name>Zn(2+)</name>
        <dbReference type="ChEBI" id="CHEBI:29105"/>
        <label>4</label>
        <note>catalytic</note>
    </ligand>
</feature>
<feature type="binding site" evidence="2">
    <location>
        <position position="301"/>
    </location>
    <ligand>
        <name>a protein</name>
        <dbReference type="ChEBI" id="CHEBI:16541"/>
    </ligand>
    <ligandPart>
        <name>N-terminal L-methionine residue</name>
        <dbReference type="ChEBI" id="CHEBI:64731"/>
    </ligandPart>
</feature>
<feature type="binding site" evidence="2">
    <location>
        <position position="327"/>
    </location>
    <ligand>
        <name>Zn(2+)</name>
        <dbReference type="ChEBI" id="CHEBI:29105"/>
        <label>4</label>
        <note>catalytic</note>
    </ligand>
</feature>
<feature type="binding site" evidence="2">
    <location>
        <position position="358"/>
    </location>
    <ligand>
        <name>Zn(2+)</name>
        <dbReference type="ChEBI" id="CHEBI:29105"/>
        <label>3</label>
    </ligand>
</feature>
<feature type="binding site" evidence="2">
    <location>
        <position position="358"/>
    </location>
    <ligand>
        <name>Zn(2+)</name>
        <dbReference type="ChEBI" id="CHEBI:29105"/>
        <label>4</label>
        <note>catalytic</note>
    </ligand>
</feature>
<feature type="modified residue" description="N-acetylalanine" evidence="1">
    <location>
        <position position="2"/>
    </location>
</feature>
<feature type="helix" evidence="6">
    <location>
        <begin position="23"/>
        <end position="28"/>
    </location>
</feature>
<feature type="strand" evidence="6">
    <location>
        <begin position="34"/>
        <end position="36"/>
    </location>
</feature>
<feature type="helix" evidence="6">
    <location>
        <begin position="38"/>
        <end position="52"/>
    </location>
</feature>